<sequence>MARIALVTGGIGGIGTSICTRLAKDGCTVVANCHPSEAAAAEEWKQARAAEGFDIAVFTADVSSFDDSARMVREITEQVGPIDILVNCAGITRDKTFKKMEQAHWEAVINVNLNSVFNVTRQVWDGMLERGFGRIINISSVNGQRGQFGQANYSAAKAGMHGFTMALAQEGASKGVTVNTISPGYVETAMTLAMNDDVRNSIISGIPMRRMAQPDEIAAAIAFLAGDESGYMTGANLPVNGGLFMH</sequence>
<feature type="chain" id="PRO_0000054749" description="Acetoacetyl-CoA reductase">
    <location>
        <begin position="1"/>
        <end position="246"/>
    </location>
</feature>
<feature type="active site" description="Proton acceptor" evidence="2">
    <location>
        <position position="153"/>
    </location>
</feature>
<feature type="binding site" evidence="1">
    <location>
        <begin position="12"/>
        <end position="14"/>
    </location>
    <ligand>
        <name>NADP(+)</name>
        <dbReference type="ChEBI" id="CHEBI:58349"/>
    </ligand>
</feature>
<feature type="binding site" evidence="1">
    <location>
        <begin position="88"/>
        <end position="92"/>
    </location>
    <ligand>
        <name>NADP(+)</name>
        <dbReference type="ChEBI" id="CHEBI:58349"/>
    </ligand>
</feature>
<feature type="binding site" evidence="1">
    <location>
        <position position="94"/>
    </location>
    <ligand>
        <name>substrate</name>
    </ligand>
</feature>
<feature type="binding site" evidence="1">
    <location>
        <begin position="147"/>
        <end position="150"/>
    </location>
    <ligand>
        <name>substrate</name>
    </ligand>
</feature>
<feature type="binding site" evidence="1">
    <location>
        <begin position="183"/>
        <end position="186"/>
    </location>
    <ligand>
        <name>NADP(+)</name>
        <dbReference type="ChEBI" id="CHEBI:58349"/>
    </ligand>
</feature>
<feature type="binding site" evidence="1">
    <location>
        <begin position="184"/>
        <end position="185"/>
    </location>
    <ligand>
        <name>substrate</name>
    </ligand>
</feature>
<feature type="sequence conflict" description="In Ref. 1; AAA23325." evidence="5" ref="1">
    <original>D</original>
    <variation>N</variation>
    <location>
        <position position="215"/>
    </location>
</feature>
<comment type="catalytic activity">
    <reaction>
        <text>a (3R)-3-hydroxyacyl-CoA + NADP(+) = a 3-oxoacyl-CoA + NADPH + H(+)</text>
        <dbReference type="Rhea" id="RHEA:22256"/>
        <dbReference type="ChEBI" id="CHEBI:15378"/>
        <dbReference type="ChEBI" id="CHEBI:57319"/>
        <dbReference type="ChEBI" id="CHEBI:57783"/>
        <dbReference type="ChEBI" id="CHEBI:58349"/>
        <dbReference type="ChEBI" id="CHEBI:90726"/>
        <dbReference type="EC" id="1.1.1.36"/>
    </reaction>
</comment>
<comment type="pathway">
    <text>Biopolymer metabolism; poly-(R)-3-hydroxybutanoate biosynthesis.</text>
</comment>
<comment type="subcellular location">
    <subcellularLocation>
        <location>Cytoplasm</location>
    </subcellularLocation>
</comment>
<comment type="similarity">
    <text evidence="5">Belongs to the short-chain dehydrogenases/reductases (SDR) family.</text>
</comment>
<evidence type="ECO:0000250" key="1">
    <source>
        <dbReference type="UniProtKB" id="P14697"/>
    </source>
</evidence>
<evidence type="ECO:0000255" key="2">
    <source>
        <dbReference type="PROSITE-ProRule" id="PRU10001"/>
    </source>
</evidence>
<evidence type="ECO:0000303" key="3">
    <source>
    </source>
</evidence>
<evidence type="ECO:0000303" key="4">
    <source>
    </source>
</evidence>
<evidence type="ECO:0000305" key="5"/>
<accession>P45375</accession>
<accession>D3RUY9</accession>
<gene>
    <name evidence="4" type="primary">phaB</name>
    <name evidence="3" type="synonym">phbB</name>
    <name type="ordered locus">Alvin_0066</name>
</gene>
<reference key="1">
    <citation type="journal article" date="1992" name="Eur. J. Biochem.">
        <title>Cloning and nucleotide sequences of genes relevant for biosynthesis of poly(3-hydroxybutyric acid) in Chromatium vinosum strain D.</title>
        <authorList>
            <person name="Liebergesell M."/>
            <person name="Steinbuechel A."/>
        </authorList>
    </citation>
    <scope>NUCLEOTIDE SEQUENCE [GENOMIC DNA]</scope>
    <source>
        <strain>ATCC 17899 / DSM 180 / NBRC 103801 / NCIMB 10441 / D</strain>
    </source>
</reference>
<reference key="2">
    <citation type="journal article" date="2011" name="Stand. Genomic Sci.">
        <title>Complete genome sequence of Allochromatium vinosum DSM 180(T).</title>
        <authorList>
            <person name="Weissgerber T."/>
            <person name="Zigann R."/>
            <person name="Bruce D."/>
            <person name="Chang Y.J."/>
            <person name="Detter J.C."/>
            <person name="Han C."/>
            <person name="Hauser L."/>
            <person name="Jeffries C.D."/>
            <person name="Land M."/>
            <person name="Munk A.C."/>
            <person name="Tapia R."/>
            <person name="Dahl C."/>
        </authorList>
    </citation>
    <scope>NUCLEOTIDE SEQUENCE [LARGE SCALE GENOMIC DNA]</scope>
    <source>
        <strain>ATCC 17899 / DSM 180 / NBRC 103801 / NCIMB 10441 / D</strain>
    </source>
</reference>
<reference key="3">
    <citation type="journal article" date="1992" name="FEMS Microbiol. Rev.">
        <title>Molecular basis for biosynthesis and accumulation of polyhydroxyalkanoic acids in bacteria.</title>
        <authorList>
            <person name="Steinbuechel A."/>
            <person name="Hustede E."/>
            <person name="Liebergesell M."/>
            <person name="Pieper U."/>
            <person name="Timm A."/>
            <person name="Valentin H."/>
        </authorList>
    </citation>
    <scope>GENE NAME</scope>
</reference>
<dbReference type="EC" id="1.1.1.36"/>
<dbReference type="EMBL" id="L01112">
    <property type="protein sequence ID" value="AAA23325.1"/>
    <property type="molecule type" value="Genomic_DNA"/>
</dbReference>
<dbReference type="EMBL" id="CP001896">
    <property type="protein sequence ID" value="ADC61038.1"/>
    <property type="molecule type" value="Genomic_DNA"/>
</dbReference>
<dbReference type="PIR" id="S29279">
    <property type="entry name" value="S29279"/>
</dbReference>
<dbReference type="RefSeq" id="WP_012969314.1">
    <property type="nucleotide sequence ID" value="NC_013851.1"/>
</dbReference>
<dbReference type="SMR" id="P45375"/>
<dbReference type="STRING" id="572477.Alvin_0066"/>
<dbReference type="KEGG" id="alv:Alvin_0066"/>
<dbReference type="eggNOG" id="COG1028">
    <property type="taxonomic scope" value="Bacteria"/>
</dbReference>
<dbReference type="HOGENOM" id="CLU_010194_1_3_6"/>
<dbReference type="OrthoDB" id="9804774at2"/>
<dbReference type="UniPathway" id="UPA00917"/>
<dbReference type="Proteomes" id="UP000001441">
    <property type="component" value="Chromosome"/>
</dbReference>
<dbReference type="GO" id="GO:0005737">
    <property type="term" value="C:cytoplasm"/>
    <property type="evidence" value="ECO:0007669"/>
    <property type="project" value="UniProtKB-SubCell"/>
</dbReference>
<dbReference type="GO" id="GO:0018454">
    <property type="term" value="F:acetoacetyl-CoA reductase activity"/>
    <property type="evidence" value="ECO:0007669"/>
    <property type="project" value="UniProtKB-EC"/>
</dbReference>
<dbReference type="GO" id="GO:0006629">
    <property type="term" value="P:lipid metabolic process"/>
    <property type="evidence" value="ECO:0007669"/>
    <property type="project" value="UniProtKB-ARBA"/>
</dbReference>
<dbReference type="GO" id="GO:0032787">
    <property type="term" value="P:monocarboxylic acid metabolic process"/>
    <property type="evidence" value="ECO:0007669"/>
    <property type="project" value="UniProtKB-ARBA"/>
</dbReference>
<dbReference type="GO" id="GO:0042619">
    <property type="term" value="P:poly-hydroxybutyrate biosynthetic process"/>
    <property type="evidence" value="ECO:0007669"/>
    <property type="project" value="UniProtKB-KW"/>
</dbReference>
<dbReference type="CDD" id="cd05333">
    <property type="entry name" value="BKR_SDR_c"/>
    <property type="match status" value="1"/>
</dbReference>
<dbReference type="FunFam" id="3.40.50.720:FF:000173">
    <property type="entry name" value="3-oxoacyl-[acyl-carrier protein] reductase"/>
    <property type="match status" value="1"/>
</dbReference>
<dbReference type="Gene3D" id="3.40.50.720">
    <property type="entry name" value="NAD(P)-binding Rossmann-like Domain"/>
    <property type="match status" value="1"/>
</dbReference>
<dbReference type="InterPro" id="IPR011283">
    <property type="entry name" value="Acetoacetyl-CoA_reductase"/>
</dbReference>
<dbReference type="InterPro" id="IPR036291">
    <property type="entry name" value="NAD(P)-bd_dom_sf"/>
</dbReference>
<dbReference type="InterPro" id="IPR020904">
    <property type="entry name" value="Sc_DH/Rdtase_CS"/>
</dbReference>
<dbReference type="InterPro" id="IPR050259">
    <property type="entry name" value="SDR"/>
</dbReference>
<dbReference type="InterPro" id="IPR002347">
    <property type="entry name" value="SDR_fam"/>
</dbReference>
<dbReference type="NCBIfam" id="TIGR01829">
    <property type="entry name" value="AcAcCoA_reduct"/>
    <property type="match status" value="1"/>
</dbReference>
<dbReference type="NCBIfam" id="NF009464">
    <property type="entry name" value="PRK12824.1"/>
    <property type="match status" value="1"/>
</dbReference>
<dbReference type="NCBIfam" id="NF009466">
    <property type="entry name" value="PRK12826.1-2"/>
    <property type="match status" value="1"/>
</dbReference>
<dbReference type="PANTHER" id="PTHR42879">
    <property type="entry name" value="3-OXOACYL-(ACYL-CARRIER-PROTEIN) REDUCTASE"/>
    <property type="match status" value="1"/>
</dbReference>
<dbReference type="PANTHER" id="PTHR42879:SF2">
    <property type="entry name" value="3-OXOACYL-[ACYL-CARRIER-PROTEIN] REDUCTASE FABG"/>
    <property type="match status" value="1"/>
</dbReference>
<dbReference type="Pfam" id="PF00106">
    <property type="entry name" value="adh_short"/>
    <property type="match status" value="1"/>
</dbReference>
<dbReference type="PRINTS" id="PR00081">
    <property type="entry name" value="GDHRDH"/>
</dbReference>
<dbReference type="PRINTS" id="PR00080">
    <property type="entry name" value="SDRFAMILY"/>
</dbReference>
<dbReference type="SMART" id="SM00822">
    <property type="entry name" value="PKS_KR"/>
    <property type="match status" value="1"/>
</dbReference>
<dbReference type="SUPFAM" id="SSF51735">
    <property type="entry name" value="NAD(P)-binding Rossmann-fold domains"/>
    <property type="match status" value="1"/>
</dbReference>
<dbReference type="PROSITE" id="PS00061">
    <property type="entry name" value="ADH_SHORT"/>
    <property type="match status" value="1"/>
</dbReference>
<keyword id="KW-0963">Cytoplasm</keyword>
<keyword id="KW-0521">NADP</keyword>
<keyword id="KW-0560">Oxidoreductase</keyword>
<keyword id="KW-0583">PHB biosynthesis</keyword>
<keyword id="KW-1185">Reference proteome</keyword>
<organism>
    <name type="scientific">Allochromatium vinosum (strain ATCC 17899 / DSM 180 / NBRC 103801 / NCIMB 10441 / D)</name>
    <name type="common">Chromatium vinosum</name>
    <dbReference type="NCBI Taxonomy" id="572477"/>
    <lineage>
        <taxon>Bacteria</taxon>
        <taxon>Pseudomonadati</taxon>
        <taxon>Pseudomonadota</taxon>
        <taxon>Gammaproteobacteria</taxon>
        <taxon>Chromatiales</taxon>
        <taxon>Chromatiaceae</taxon>
        <taxon>Allochromatium</taxon>
    </lineage>
</organism>
<protein>
    <recommendedName>
        <fullName>Acetoacetyl-CoA reductase</fullName>
        <ecNumber>1.1.1.36</ecNumber>
    </recommendedName>
</protein>
<proteinExistence type="inferred from homology"/>
<name>PHAB_ALLVD</name>